<comment type="function">
    <text evidence="1">Catalyzes the conversion of oxaloacetate (OAA) to phosphoenolpyruvate (PEP), the rate-limiting step in the metabolic pathway that produces glucose from lactate and other precursors derived from the citric acid cycle.</text>
</comment>
<comment type="catalytic activity">
    <reaction evidence="1">
        <text>oxaloacetate + GTP = phosphoenolpyruvate + GDP + CO2</text>
        <dbReference type="Rhea" id="RHEA:10388"/>
        <dbReference type="ChEBI" id="CHEBI:16452"/>
        <dbReference type="ChEBI" id="CHEBI:16526"/>
        <dbReference type="ChEBI" id="CHEBI:37565"/>
        <dbReference type="ChEBI" id="CHEBI:58189"/>
        <dbReference type="ChEBI" id="CHEBI:58702"/>
        <dbReference type="EC" id="4.1.1.32"/>
    </reaction>
</comment>
<comment type="cofactor">
    <cofactor evidence="1">
        <name>Mn(2+)</name>
        <dbReference type="ChEBI" id="CHEBI:29035"/>
    </cofactor>
    <text evidence="1">Binds 1 Mn(2+) ion per subunit.</text>
</comment>
<comment type="pathway">
    <text evidence="1">Carbohydrate biosynthesis; gluconeogenesis.</text>
</comment>
<comment type="subunit">
    <text evidence="1">Monomer.</text>
</comment>
<comment type="subcellular location">
    <subcellularLocation>
        <location evidence="1">Cytoplasm</location>
    </subcellularLocation>
</comment>
<comment type="similarity">
    <text evidence="1">Belongs to the phosphoenolpyruvate carboxykinase [GTP] family.</text>
</comment>
<accession>Q7WJQ9</accession>
<name>PCKG_BORBR</name>
<feature type="chain" id="PRO_0000103590" description="Phosphoenolpyruvate carboxykinase [GTP]">
    <location>
        <begin position="1"/>
        <end position="618"/>
    </location>
</feature>
<feature type="active site" evidence="1">
    <location>
        <position position="277"/>
    </location>
</feature>
<feature type="binding site" evidence="1">
    <location>
        <position position="85"/>
    </location>
    <ligand>
        <name>substrate</name>
    </ligand>
</feature>
<feature type="binding site" evidence="1">
    <location>
        <begin position="224"/>
        <end position="226"/>
    </location>
    <ligand>
        <name>substrate</name>
    </ligand>
</feature>
<feature type="binding site" evidence="1">
    <location>
        <position position="233"/>
    </location>
    <ligand>
        <name>Mn(2+)</name>
        <dbReference type="ChEBI" id="CHEBI:29035"/>
    </ligand>
</feature>
<feature type="binding site" evidence="1">
    <location>
        <position position="253"/>
    </location>
    <ligand>
        <name>Mn(2+)</name>
        <dbReference type="ChEBI" id="CHEBI:29035"/>
    </ligand>
</feature>
<feature type="binding site" evidence="1">
    <location>
        <position position="275"/>
    </location>
    <ligand>
        <name>substrate</name>
    </ligand>
</feature>
<feature type="binding site" evidence="1">
    <location>
        <begin position="276"/>
        <end position="281"/>
    </location>
    <ligand>
        <name>GTP</name>
        <dbReference type="ChEBI" id="CHEBI:37565"/>
    </ligand>
</feature>
<feature type="binding site" evidence="1">
    <location>
        <position position="302"/>
    </location>
    <ligand>
        <name>Mn(2+)</name>
        <dbReference type="ChEBI" id="CHEBI:29035"/>
    </ligand>
</feature>
<feature type="binding site" evidence="1">
    <location>
        <begin position="396"/>
        <end position="398"/>
    </location>
    <ligand>
        <name>substrate</name>
    </ligand>
</feature>
<feature type="binding site" evidence="1">
    <location>
        <position position="398"/>
    </location>
    <ligand>
        <name>GTP</name>
        <dbReference type="ChEBI" id="CHEBI:37565"/>
    </ligand>
</feature>
<feature type="binding site" evidence="1">
    <location>
        <position position="429"/>
    </location>
    <ligand>
        <name>GTP</name>
        <dbReference type="ChEBI" id="CHEBI:37565"/>
    </ligand>
</feature>
<feature type="binding site" evidence="1">
    <location>
        <begin position="526"/>
        <end position="529"/>
    </location>
    <ligand>
        <name>GTP</name>
        <dbReference type="ChEBI" id="CHEBI:37565"/>
    </ligand>
</feature>
<gene>
    <name evidence="1" type="primary">pckG</name>
    <name type="synonym">pck</name>
    <name type="ordered locus">BB2434</name>
</gene>
<protein>
    <recommendedName>
        <fullName evidence="1">Phosphoenolpyruvate carboxykinase [GTP]</fullName>
        <shortName evidence="1">PEP carboxykinase</shortName>
        <shortName evidence="1">PEPCK</shortName>
        <ecNumber evidence="1">4.1.1.32</ecNumber>
    </recommendedName>
</protein>
<proteinExistence type="inferred from homology"/>
<reference key="1">
    <citation type="journal article" date="2003" name="Nat. Genet.">
        <title>Comparative analysis of the genome sequences of Bordetella pertussis, Bordetella parapertussis and Bordetella bronchiseptica.</title>
        <authorList>
            <person name="Parkhill J."/>
            <person name="Sebaihia M."/>
            <person name="Preston A."/>
            <person name="Murphy L.D."/>
            <person name="Thomson N.R."/>
            <person name="Harris D.E."/>
            <person name="Holden M.T.G."/>
            <person name="Churcher C.M."/>
            <person name="Bentley S.D."/>
            <person name="Mungall K.L."/>
            <person name="Cerdeno-Tarraga A.-M."/>
            <person name="Temple L."/>
            <person name="James K.D."/>
            <person name="Harris B."/>
            <person name="Quail M.A."/>
            <person name="Achtman M."/>
            <person name="Atkin R."/>
            <person name="Baker S."/>
            <person name="Basham D."/>
            <person name="Bason N."/>
            <person name="Cherevach I."/>
            <person name="Chillingworth T."/>
            <person name="Collins M."/>
            <person name="Cronin A."/>
            <person name="Davis P."/>
            <person name="Doggett J."/>
            <person name="Feltwell T."/>
            <person name="Goble A."/>
            <person name="Hamlin N."/>
            <person name="Hauser H."/>
            <person name="Holroyd S."/>
            <person name="Jagels K."/>
            <person name="Leather S."/>
            <person name="Moule S."/>
            <person name="Norberczak H."/>
            <person name="O'Neil S."/>
            <person name="Ormond D."/>
            <person name="Price C."/>
            <person name="Rabbinowitsch E."/>
            <person name="Rutter S."/>
            <person name="Sanders M."/>
            <person name="Saunders D."/>
            <person name="Seeger K."/>
            <person name="Sharp S."/>
            <person name="Simmonds M."/>
            <person name="Skelton J."/>
            <person name="Squares R."/>
            <person name="Squares S."/>
            <person name="Stevens K."/>
            <person name="Unwin L."/>
            <person name="Whitehead S."/>
            <person name="Barrell B.G."/>
            <person name="Maskell D.J."/>
        </authorList>
    </citation>
    <scope>NUCLEOTIDE SEQUENCE [LARGE SCALE GENOMIC DNA]</scope>
    <source>
        <strain>ATCC BAA-588 / NCTC 13252 / RB50</strain>
    </source>
</reference>
<keyword id="KW-0963">Cytoplasm</keyword>
<keyword id="KW-0210">Decarboxylase</keyword>
<keyword id="KW-0312">Gluconeogenesis</keyword>
<keyword id="KW-0342">GTP-binding</keyword>
<keyword id="KW-0456">Lyase</keyword>
<keyword id="KW-0464">Manganese</keyword>
<keyword id="KW-0479">Metal-binding</keyword>
<keyword id="KW-0547">Nucleotide-binding</keyword>
<dbReference type="EC" id="4.1.1.32" evidence="1"/>
<dbReference type="EMBL" id="BX640444">
    <property type="protein sequence ID" value="CAE32928.1"/>
    <property type="molecule type" value="Genomic_DNA"/>
</dbReference>
<dbReference type="RefSeq" id="WP_003817018.1">
    <property type="nucleotide sequence ID" value="NC_002927.3"/>
</dbReference>
<dbReference type="SMR" id="Q7WJQ9"/>
<dbReference type="KEGG" id="bbr:BB2434"/>
<dbReference type="eggNOG" id="COG1274">
    <property type="taxonomic scope" value="Bacteria"/>
</dbReference>
<dbReference type="HOGENOM" id="CLU_028872_1_1_4"/>
<dbReference type="UniPathway" id="UPA00138"/>
<dbReference type="Proteomes" id="UP000001027">
    <property type="component" value="Chromosome"/>
</dbReference>
<dbReference type="GO" id="GO:0005829">
    <property type="term" value="C:cytosol"/>
    <property type="evidence" value="ECO:0007669"/>
    <property type="project" value="TreeGrafter"/>
</dbReference>
<dbReference type="GO" id="GO:0005525">
    <property type="term" value="F:GTP binding"/>
    <property type="evidence" value="ECO:0007669"/>
    <property type="project" value="UniProtKB-UniRule"/>
</dbReference>
<dbReference type="GO" id="GO:0030145">
    <property type="term" value="F:manganese ion binding"/>
    <property type="evidence" value="ECO:0007669"/>
    <property type="project" value="UniProtKB-UniRule"/>
</dbReference>
<dbReference type="GO" id="GO:0004613">
    <property type="term" value="F:phosphoenolpyruvate carboxykinase (GTP) activity"/>
    <property type="evidence" value="ECO:0007669"/>
    <property type="project" value="UniProtKB-UniRule"/>
</dbReference>
<dbReference type="GO" id="GO:0071333">
    <property type="term" value="P:cellular response to glucose stimulus"/>
    <property type="evidence" value="ECO:0007669"/>
    <property type="project" value="TreeGrafter"/>
</dbReference>
<dbReference type="GO" id="GO:0006094">
    <property type="term" value="P:gluconeogenesis"/>
    <property type="evidence" value="ECO:0007669"/>
    <property type="project" value="UniProtKB-UniRule"/>
</dbReference>
<dbReference type="GO" id="GO:0046327">
    <property type="term" value="P:glycerol biosynthetic process from pyruvate"/>
    <property type="evidence" value="ECO:0007669"/>
    <property type="project" value="TreeGrafter"/>
</dbReference>
<dbReference type="GO" id="GO:0006107">
    <property type="term" value="P:oxaloacetate metabolic process"/>
    <property type="evidence" value="ECO:0007669"/>
    <property type="project" value="TreeGrafter"/>
</dbReference>
<dbReference type="GO" id="GO:0019543">
    <property type="term" value="P:propionate catabolic process"/>
    <property type="evidence" value="ECO:0007669"/>
    <property type="project" value="TreeGrafter"/>
</dbReference>
<dbReference type="GO" id="GO:0033993">
    <property type="term" value="P:response to lipid"/>
    <property type="evidence" value="ECO:0007669"/>
    <property type="project" value="TreeGrafter"/>
</dbReference>
<dbReference type="GO" id="GO:0042594">
    <property type="term" value="P:response to starvation"/>
    <property type="evidence" value="ECO:0007669"/>
    <property type="project" value="TreeGrafter"/>
</dbReference>
<dbReference type="CDD" id="cd00819">
    <property type="entry name" value="PEPCK_GTP"/>
    <property type="match status" value="1"/>
</dbReference>
<dbReference type="FunFam" id="3.40.449.10:FF:000005">
    <property type="entry name" value="Phosphoenolpyruvate carboxykinase [GTP]"/>
    <property type="match status" value="1"/>
</dbReference>
<dbReference type="Gene3D" id="3.90.228.20">
    <property type="match status" value="1"/>
</dbReference>
<dbReference type="Gene3D" id="3.40.449.10">
    <property type="entry name" value="Phosphoenolpyruvate Carboxykinase, domain 1"/>
    <property type="match status" value="1"/>
</dbReference>
<dbReference type="Gene3D" id="2.170.8.10">
    <property type="entry name" value="Phosphoenolpyruvate Carboxykinase, domain 2"/>
    <property type="match status" value="1"/>
</dbReference>
<dbReference type="HAMAP" id="MF_00452">
    <property type="entry name" value="PEPCK_GTP"/>
    <property type="match status" value="1"/>
</dbReference>
<dbReference type="InterPro" id="IPR018091">
    <property type="entry name" value="PEP_carboxykin_GTP_CS"/>
</dbReference>
<dbReference type="InterPro" id="IPR013035">
    <property type="entry name" value="PEP_carboxykinase_C"/>
</dbReference>
<dbReference type="InterPro" id="IPR008209">
    <property type="entry name" value="PEP_carboxykinase_GTP"/>
</dbReference>
<dbReference type="InterPro" id="IPR035077">
    <property type="entry name" value="PEP_carboxykinase_GTP_C"/>
</dbReference>
<dbReference type="InterPro" id="IPR035078">
    <property type="entry name" value="PEP_carboxykinase_GTP_N"/>
</dbReference>
<dbReference type="InterPro" id="IPR008210">
    <property type="entry name" value="PEP_carboxykinase_N"/>
</dbReference>
<dbReference type="NCBIfam" id="NF003253">
    <property type="entry name" value="PRK04210.1"/>
    <property type="match status" value="1"/>
</dbReference>
<dbReference type="PANTHER" id="PTHR11561">
    <property type="entry name" value="PHOSPHOENOLPYRUVATE CARBOXYKINASE"/>
    <property type="match status" value="1"/>
</dbReference>
<dbReference type="PANTHER" id="PTHR11561:SF0">
    <property type="entry name" value="PHOSPHOENOLPYRUVATE CARBOXYKINASE [GTP]-RELATED"/>
    <property type="match status" value="1"/>
</dbReference>
<dbReference type="Pfam" id="PF00821">
    <property type="entry name" value="PEPCK_GTP"/>
    <property type="match status" value="1"/>
</dbReference>
<dbReference type="Pfam" id="PF17297">
    <property type="entry name" value="PEPCK_N"/>
    <property type="match status" value="1"/>
</dbReference>
<dbReference type="PIRSF" id="PIRSF001348">
    <property type="entry name" value="PEP_carboxykinase_GTP"/>
    <property type="match status" value="1"/>
</dbReference>
<dbReference type="SUPFAM" id="SSF68923">
    <property type="entry name" value="PEP carboxykinase N-terminal domain"/>
    <property type="match status" value="1"/>
</dbReference>
<dbReference type="SUPFAM" id="SSF53795">
    <property type="entry name" value="PEP carboxykinase-like"/>
    <property type="match status" value="1"/>
</dbReference>
<dbReference type="PROSITE" id="PS00505">
    <property type="entry name" value="PEPCK_GTP"/>
    <property type="match status" value="1"/>
</dbReference>
<evidence type="ECO:0000255" key="1">
    <source>
        <dbReference type="HAMAP-Rule" id="MF_00452"/>
    </source>
</evidence>
<sequence length="618" mass="67954">MNKPSEVKPVALNVPDYVKHSGLIAWVERIAALTKPDRVVWCDGSQEEYDRLCEQMVQGGTMRRLNPAKRANSYLACSDPSDVARVEDRTFICSEREEDAGPTNNWAAPQAMRETLGGLFDGAMRGRTMYVVPFSMGPLGSPIAHIGVELSDSPYVVVNMRIMTRMGRKVFDVLGSDGAFVPCVHSVGMPLAEGQQDVAWPCNPTKYIVHYPETREIWSFGSGYGGNALLGKKCFALRIASTMGRDEGWLAEHMLILGVTSPKGRKYHVAAAFPSACGKTNFAMLIPPHGMDGWKVTTIGDDIAWIKPGPDGRLHAINPEAGYFGVAPGTSEKTNFNAMATLKANVIFTNVALTDDGDVWWEGMTDTPPAHLIDWQGQDWTPAIAAETGRKAAHPNARFTAPAAQCPSIDPEWENPKGVAIDAFIFGGRRSTTVPLVTEARNWVEGVYMAATMGSETTAAAAGQQGVVRRDPFAMLPFCGYNMSDYFDHWLKLGRRLEETGATLPRIYCVNWFRKGPDGKFVWPGFGENMRVLRWMLGRLDGQAGGVDQVFGISPAYGDIDWTGLEFSPDKFEQVISVDLPAWRAELALHDELFTQLAARLPEDLPLTRTAIERRMAA</sequence>
<organism>
    <name type="scientific">Bordetella bronchiseptica (strain ATCC BAA-588 / NCTC 13252 / RB50)</name>
    <name type="common">Alcaligenes bronchisepticus</name>
    <dbReference type="NCBI Taxonomy" id="257310"/>
    <lineage>
        <taxon>Bacteria</taxon>
        <taxon>Pseudomonadati</taxon>
        <taxon>Pseudomonadota</taxon>
        <taxon>Betaproteobacteria</taxon>
        <taxon>Burkholderiales</taxon>
        <taxon>Alcaligenaceae</taxon>
        <taxon>Bordetella</taxon>
    </lineage>
</organism>